<organism>
    <name type="scientific">Oryctolagus cuniculus</name>
    <name type="common">Rabbit</name>
    <dbReference type="NCBI Taxonomy" id="9986"/>
    <lineage>
        <taxon>Eukaryota</taxon>
        <taxon>Metazoa</taxon>
        <taxon>Chordata</taxon>
        <taxon>Craniata</taxon>
        <taxon>Vertebrata</taxon>
        <taxon>Euteleostomi</taxon>
        <taxon>Mammalia</taxon>
        <taxon>Eutheria</taxon>
        <taxon>Euarchontoglires</taxon>
        <taxon>Glires</taxon>
        <taxon>Lagomorpha</taxon>
        <taxon>Leporidae</taxon>
        <taxon>Oryctolagus</taxon>
    </lineage>
</organism>
<comment type="function">
    <text>Endothelins are endothelium-derived vasoconstrictor peptides.</text>
</comment>
<comment type="subcellular location">
    <subcellularLocation>
        <location>Secreted</location>
    </subcellularLocation>
</comment>
<comment type="similarity">
    <text evidence="4">Belongs to the endothelin/sarafotoxin family.</text>
</comment>
<feature type="signal peptide" evidence="2">
    <location>
        <begin position="1"/>
        <end position="24"/>
    </location>
</feature>
<feature type="propeptide" id="PRO_0000008102" evidence="1">
    <location>
        <begin position="25"/>
        <end position="46"/>
    </location>
</feature>
<feature type="peptide" id="PRO_0000008103" description="Endothelin-2">
    <location>
        <begin position="49"/>
        <end position="69"/>
    </location>
</feature>
<feature type="propeptide" id="PRO_0000008104" evidence="1">
    <location>
        <begin position="70"/>
        <end position="178"/>
    </location>
</feature>
<feature type="region of interest" description="Endothelin-like">
    <location>
        <begin position="96"/>
        <end position="111"/>
    </location>
</feature>
<feature type="region of interest" description="Disordered" evidence="3">
    <location>
        <begin position="154"/>
        <end position="178"/>
    </location>
</feature>
<feature type="compositionally biased region" description="Basic and acidic residues" evidence="3">
    <location>
        <begin position="160"/>
        <end position="170"/>
    </location>
</feature>
<feature type="site" description="Cleavage; by KEL" evidence="1">
    <location>
        <begin position="69"/>
        <end position="70"/>
    </location>
</feature>
<feature type="disulfide bond" evidence="1">
    <location>
        <begin position="49"/>
        <end position="63"/>
    </location>
</feature>
<feature type="disulfide bond" evidence="1">
    <location>
        <begin position="51"/>
        <end position="59"/>
    </location>
</feature>
<evidence type="ECO:0000250" key="1"/>
<evidence type="ECO:0000255" key="2"/>
<evidence type="ECO:0000256" key="3">
    <source>
        <dbReference type="SAM" id="MobiDB-lite"/>
    </source>
</evidence>
<evidence type="ECO:0000305" key="4"/>
<keyword id="KW-0165">Cleavage on pair of basic residues</keyword>
<keyword id="KW-1015">Disulfide bond</keyword>
<keyword id="KW-1185">Reference proteome</keyword>
<keyword id="KW-0964">Secreted</keyword>
<keyword id="KW-0732">Signal</keyword>
<keyword id="KW-0838">Vasoactive</keyword>
<keyword id="KW-0839">Vasoconstrictor</keyword>
<proteinExistence type="evidence at transcript level"/>
<sequence>MVSVPTAWCSVALALLVALHEGKDQAAATLEQPASSPRARAAHLRLRRCSCSSWLDKECVYFCHLDIIWVNTPGQTAPYGLGNPPRRRRRSLPGRCECSSARDPACATFCHQRSRADAVGVPGSQSSADAFQAGKTWATPGELLRTLRDISAAKTHFAKRQQEATREPRTTHSRHRKR</sequence>
<name>EDN2_RABIT</name>
<gene>
    <name type="primary">EDN2</name>
</gene>
<reference key="1">
    <citation type="submission" date="2003-07" db="EMBL/GenBank/DDBJ databases">
        <title>Cloning and sequencing of complete cDNA of rabbit preproendothelin-2.</title>
        <authorList>
            <person name="Uchide T."/>
        </authorList>
    </citation>
    <scope>NUCLEOTIDE SEQUENCE [MRNA]</scope>
</reference>
<accession>Q765Z5</accession>
<dbReference type="EMBL" id="AB115085">
    <property type="protein sequence ID" value="BAD07478.1"/>
    <property type="molecule type" value="mRNA"/>
</dbReference>
<dbReference type="RefSeq" id="NP_001075481.1">
    <property type="nucleotide sequence ID" value="NM_001082012.1"/>
</dbReference>
<dbReference type="FunCoup" id="Q765Z5">
    <property type="interactions" value="192"/>
</dbReference>
<dbReference type="STRING" id="9986.ENSOCUP00000001041"/>
<dbReference type="PaxDb" id="9986-ENSOCUP00000001041"/>
<dbReference type="GeneID" id="100008634"/>
<dbReference type="KEGG" id="ocu:100008634"/>
<dbReference type="CTD" id="1907"/>
<dbReference type="eggNOG" id="ENOG502S5KM">
    <property type="taxonomic scope" value="Eukaryota"/>
</dbReference>
<dbReference type="InParanoid" id="Q765Z5"/>
<dbReference type="OrthoDB" id="9362154at2759"/>
<dbReference type="Proteomes" id="UP000001811">
    <property type="component" value="Unplaced"/>
</dbReference>
<dbReference type="GO" id="GO:0005615">
    <property type="term" value="C:extracellular space"/>
    <property type="evidence" value="ECO:0007669"/>
    <property type="project" value="TreeGrafter"/>
</dbReference>
<dbReference type="GO" id="GO:0031708">
    <property type="term" value="F:endothelin B receptor binding"/>
    <property type="evidence" value="ECO:0007669"/>
    <property type="project" value="TreeGrafter"/>
</dbReference>
<dbReference type="GO" id="GO:0005179">
    <property type="term" value="F:hormone activity"/>
    <property type="evidence" value="ECO:0007669"/>
    <property type="project" value="TreeGrafter"/>
</dbReference>
<dbReference type="GO" id="GO:0006874">
    <property type="term" value="P:intracellular calcium ion homeostasis"/>
    <property type="evidence" value="ECO:0007669"/>
    <property type="project" value="TreeGrafter"/>
</dbReference>
<dbReference type="GO" id="GO:0003100">
    <property type="term" value="P:regulation of systemic arterial blood pressure by endothelin"/>
    <property type="evidence" value="ECO:0007669"/>
    <property type="project" value="TreeGrafter"/>
</dbReference>
<dbReference type="GO" id="GO:0019229">
    <property type="term" value="P:regulation of vasoconstriction"/>
    <property type="evidence" value="ECO:0007669"/>
    <property type="project" value="InterPro"/>
</dbReference>
<dbReference type="GO" id="GO:0014826">
    <property type="term" value="P:vein smooth muscle contraction"/>
    <property type="evidence" value="ECO:0007669"/>
    <property type="project" value="TreeGrafter"/>
</dbReference>
<dbReference type="InterPro" id="IPR020475">
    <property type="entry name" value="Endothelin"/>
</dbReference>
<dbReference type="InterPro" id="IPR019764">
    <property type="entry name" value="Endothelin_toxin_CS"/>
</dbReference>
<dbReference type="InterPro" id="IPR001928">
    <property type="entry name" value="Endothln-like_toxin"/>
</dbReference>
<dbReference type="PANTHER" id="PTHR13874">
    <property type="entry name" value="ENDOTHELIN"/>
    <property type="match status" value="1"/>
</dbReference>
<dbReference type="PANTHER" id="PTHR13874:SF9">
    <property type="entry name" value="ENDOTHELIN-2"/>
    <property type="match status" value="1"/>
</dbReference>
<dbReference type="Pfam" id="PF00322">
    <property type="entry name" value="Endothelin"/>
    <property type="match status" value="1"/>
</dbReference>
<dbReference type="PRINTS" id="PR00365">
    <property type="entry name" value="ENDOTHELIN"/>
</dbReference>
<dbReference type="SMART" id="SM00272">
    <property type="entry name" value="END"/>
    <property type="match status" value="2"/>
</dbReference>
<dbReference type="PROSITE" id="PS00270">
    <property type="entry name" value="ENDOTHELIN"/>
    <property type="match status" value="2"/>
</dbReference>
<protein>
    <recommendedName>
        <fullName>Endothelin-2</fullName>
        <shortName>ET-2</shortName>
    </recommendedName>
    <alternativeName>
        <fullName>Preproendothelin-2</fullName>
        <shortName>PPET2</shortName>
    </alternativeName>
</protein>